<proteinExistence type="inferred from homology"/>
<feature type="chain" id="PRO_0000269590" description="Hemin import ATP-binding protein HmuV">
    <location>
        <begin position="1"/>
        <end position="256"/>
    </location>
</feature>
<feature type="domain" description="ABC transporter" evidence="1">
    <location>
        <begin position="2"/>
        <end position="238"/>
    </location>
</feature>
<feature type="binding site" evidence="1">
    <location>
        <begin position="34"/>
        <end position="41"/>
    </location>
    <ligand>
        <name>ATP</name>
        <dbReference type="ChEBI" id="CHEBI:30616"/>
    </ligand>
</feature>
<accession>Q0TBU8</accession>
<organism>
    <name type="scientific">Escherichia coli O6:K15:H31 (strain 536 / UPEC)</name>
    <dbReference type="NCBI Taxonomy" id="362663"/>
    <lineage>
        <taxon>Bacteria</taxon>
        <taxon>Pseudomonadati</taxon>
        <taxon>Pseudomonadota</taxon>
        <taxon>Gammaproteobacteria</taxon>
        <taxon>Enterobacterales</taxon>
        <taxon>Enterobacteriaceae</taxon>
        <taxon>Escherichia</taxon>
    </lineage>
</organism>
<sequence length="256" mass="28881">MISAQNLVYSLQGRRLTDNVSLTFPGGEIVAILGPNGAGKSTLLRQLTGYLQPDSGECRLFNKPLNEWSITELAKHRAVMRQNSHMAFPFSVQEVIQMGRHPHRTGNQDNETAQIMALCDCQALANRDYRQLSGGEQQRVQLARLLVQLWEPTPSPKWLFLDEPTSALDIHHQQHLFRLLRQLVHERQFNVCCVLHDLNLAARYADRVVLMQKGKVIANGKPQDVLTQQALTMLYGADITVLKDPANHSPLIVLDH</sequence>
<name>HMUV_ECOL5</name>
<dbReference type="EC" id="7.6.2.-" evidence="1"/>
<dbReference type="EMBL" id="CP000247">
    <property type="protein sequence ID" value="ABG71581.1"/>
    <property type="molecule type" value="Genomic_DNA"/>
</dbReference>
<dbReference type="RefSeq" id="WP_000622316.1">
    <property type="nucleotide sequence ID" value="NC_008253.1"/>
</dbReference>
<dbReference type="SMR" id="Q0TBU8"/>
<dbReference type="KEGG" id="ecp:ECP_3605"/>
<dbReference type="HOGENOM" id="CLU_000604_1_11_6"/>
<dbReference type="Proteomes" id="UP000009182">
    <property type="component" value="Chromosome"/>
</dbReference>
<dbReference type="GO" id="GO:0005886">
    <property type="term" value="C:plasma membrane"/>
    <property type="evidence" value="ECO:0007669"/>
    <property type="project" value="UniProtKB-SubCell"/>
</dbReference>
<dbReference type="GO" id="GO:0005524">
    <property type="term" value="F:ATP binding"/>
    <property type="evidence" value="ECO:0007669"/>
    <property type="project" value="UniProtKB-KW"/>
</dbReference>
<dbReference type="GO" id="GO:0016887">
    <property type="term" value="F:ATP hydrolysis activity"/>
    <property type="evidence" value="ECO:0007669"/>
    <property type="project" value="InterPro"/>
</dbReference>
<dbReference type="CDD" id="cd03214">
    <property type="entry name" value="ABC_Iron-Siderophores_B12_Hemin"/>
    <property type="match status" value="1"/>
</dbReference>
<dbReference type="FunFam" id="3.40.50.300:FF:000134">
    <property type="entry name" value="Iron-enterobactin ABC transporter ATP-binding protein"/>
    <property type="match status" value="1"/>
</dbReference>
<dbReference type="Gene3D" id="3.40.50.300">
    <property type="entry name" value="P-loop containing nucleotide triphosphate hydrolases"/>
    <property type="match status" value="1"/>
</dbReference>
<dbReference type="InterPro" id="IPR003593">
    <property type="entry name" value="AAA+_ATPase"/>
</dbReference>
<dbReference type="InterPro" id="IPR003439">
    <property type="entry name" value="ABC_transporter-like_ATP-bd"/>
</dbReference>
<dbReference type="InterPro" id="IPR017871">
    <property type="entry name" value="ABC_transporter-like_CS"/>
</dbReference>
<dbReference type="InterPro" id="IPR027417">
    <property type="entry name" value="P-loop_NTPase"/>
</dbReference>
<dbReference type="NCBIfam" id="NF010068">
    <property type="entry name" value="PRK13548.1"/>
    <property type="match status" value="1"/>
</dbReference>
<dbReference type="PANTHER" id="PTHR42794">
    <property type="entry name" value="HEMIN IMPORT ATP-BINDING PROTEIN HMUV"/>
    <property type="match status" value="1"/>
</dbReference>
<dbReference type="PANTHER" id="PTHR42794:SF1">
    <property type="entry name" value="HEMIN IMPORT ATP-BINDING PROTEIN HMUV"/>
    <property type="match status" value="1"/>
</dbReference>
<dbReference type="Pfam" id="PF00005">
    <property type="entry name" value="ABC_tran"/>
    <property type="match status" value="1"/>
</dbReference>
<dbReference type="SMART" id="SM00382">
    <property type="entry name" value="AAA"/>
    <property type="match status" value="1"/>
</dbReference>
<dbReference type="SUPFAM" id="SSF52540">
    <property type="entry name" value="P-loop containing nucleoside triphosphate hydrolases"/>
    <property type="match status" value="1"/>
</dbReference>
<dbReference type="PROSITE" id="PS00211">
    <property type="entry name" value="ABC_TRANSPORTER_1"/>
    <property type="match status" value="1"/>
</dbReference>
<dbReference type="PROSITE" id="PS50893">
    <property type="entry name" value="ABC_TRANSPORTER_2"/>
    <property type="match status" value="1"/>
</dbReference>
<dbReference type="PROSITE" id="PS51261">
    <property type="entry name" value="HMUV"/>
    <property type="match status" value="1"/>
</dbReference>
<protein>
    <recommendedName>
        <fullName evidence="1">Hemin import ATP-binding protein HmuV</fullName>
        <ecNumber evidence="1">7.6.2.-</ecNumber>
    </recommendedName>
</protein>
<comment type="function">
    <text evidence="1">Part of the ABC transporter complex HmuTUV involved in hemin import. Responsible for energy coupling to the transport system.</text>
</comment>
<comment type="subunit">
    <text evidence="1">The complex is composed of two ATP-binding proteins (HmuV), two transmembrane proteins (HmuU) and a solute-binding protein (HmuT).</text>
</comment>
<comment type="subcellular location">
    <subcellularLocation>
        <location evidence="1">Cell inner membrane</location>
        <topology evidence="1">Peripheral membrane protein</topology>
    </subcellularLocation>
</comment>
<comment type="similarity">
    <text evidence="1">Belongs to the ABC transporter superfamily. Heme (hemin) importer (TC 3.A.1.14.5) family.</text>
</comment>
<gene>
    <name evidence="1" type="primary">hmuV</name>
    <name type="ordered locus">ECP_3605</name>
</gene>
<keyword id="KW-0067">ATP-binding</keyword>
<keyword id="KW-0997">Cell inner membrane</keyword>
<keyword id="KW-1003">Cell membrane</keyword>
<keyword id="KW-0472">Membrane</keyword>
<keyword id="KW-0547">Nucleotide-binding</keyword>
<keyword id="KW-1278">Translocase</keyword>
<keyword id="KW-0813">Transport</keyword>
<evidence type="ECO:0000255" key="1">
    <source>
        <dbReference type="HAMAP-Rule" id="MF_01718"/>
    </source>
</evidence>
<reference key="1">
    <citation type="journal article" date="2006" name="Mol. Microbiol.">
        <title>Role of pathogenicity island-associated integrases in the genome plasticity of uropathogenic Escherichia coli strain 536.</title>
        <authorList>
            <person name="Hochhut B."/>
            <person name="Wilde C."/>
            <person name="Balling G."/>
            <person name="Middendorf B."/>
            <person name="Dobrindt U."/>
            <person name="Brzuszkiewicz E."/>
            <person name="Gottschalk G."/>
            <person name="Carniel E."/>
            <person name="Hacker J."/>
        </authorList>
    </citation>
    <scope>NUCLEOTIDE SEQUENCE [LARGE SCALE GENOMIC DNA]</scope>
    <source>
        <strain>536 / UPEC</strain>
    </source>
</reference>